<evidence type="ECO:0000255" key="1">
    <source>
        <dbReference type="HAMAP-Rule" id="MF_00270"/>
    </source>
</evidence>
<evidence type="ECO:0000305" key="2"/>
<gene>
    <name evidence="1" type="primary">rpsR</name>
    <name type="ordered locus">LCA_0009</name>
</gene>
<organism>
    <name type="scientific">Latilactobacillus sakei subsp. sakei (strain 23K)</name>
    <name type="common">Lactobacillus sakei subsp. sakei</name>
    <dbReference type="NCBI Taxonomy" id="314315"/>
    <lineage>
        <taxon>Bacteria</taxon>
        <taxon>Bacillati</taxon>
        <taxon>Bacillota</taxon>
        <taxon>Bacilli</taxon>
        <taxon>Lactobacillales</taxon>
        <taxon>Lactobacillaceae</taxon>
        <taxon>Latilactobacillus</taxon>
    </lineage>
</organism>
<dbReference type="EMBL" id="CR936503">
    <property type="protein sequence ID" value="CAI54311.1"/>
    <property type="molecule type" value="Genomic_DNA"/>
</dbReference>
<dbReference type="RefSeq" id="WP_004265822.1">
    <property type="nucleotide sequence ID" value="NC_007576.1"/>
</dbReference>
<dbReference type="SMR" id="Q38ZR6"/>
<dbReference type="STRING" id="314315.LCA_0009"/>
<dbReference type="GeneID" id="57132830"/>
<dbReference type="KEGG" id="lsa:LCA_0009"/>
<dbReference type="eggNOG" id="COG0238">
    <property type="taxonomic scope" value="Bacteria"/>
</dbReference>
<dbReference type="HOGENOM" id="CLU_148710_2_2_9"/>
<dbReference type="OrthoDB" id="9812008at2"/>
<dbReference type="Proteomes" id="UP000002707">
    <property type="component" value="Chromosome"/>
</dbReference>
<dbReference type="GO" id="GO:0022627">
    <property type="term" value="C:cytosolic small ribosomal subunit"/>
    <property type="evidence" value="ECO:0007669"/>
    <property type="project" value="TreeGrafter"/>
</dbReference>
<dbReference type="GO" id="GO:0070181">
    <property type="term" value="F:small ribosomal subunit rRNA binding"/>
    <property type="evidence" value="ECO:0007669"/>
    <property type="project" value="TreeGrafter"/>
</dbReference>
<dbReference type="GO" id="GO:0003735">
    <property type="term" value="F:structural constituent of ribosome"/>
    <property type="evidence" value="ECO:0007669"/>
    <property type="project" value="InterPro"/>
</dbReference>
<dbReference type="GO" id="GO:0006412">
    <property type="term" value="P:translation"/>
    <property type="evidence" value="ECO:0007669"/>
    <property type="project" value="UniProtKB-UniRule"/>
</dbReference>
<dbReference type="FunFam" id="4.10.640.10:FF:000003">
    <property type="entry name" value="30S ribosomal protein S18"/>
    <property type="match status" value="1"/>
</dbReference>
<dbReference type="Gene3D" id="4.10.640.10">
    <property type="entry name" value="Ribosomal protein S18"/>
    <property type="match status" value="1"/>
</dbReference>
<dbReference type="HAMAP" id="MF_00270">
    <property type="entry name" value="Ribosomal_bS18"/>
    <property type="match status" value="1"/>
</dbReference>
<dbReference type="InterPro" id="IPR001648">
    <property type="entry name" value="Ribosomal_bS18"/>
</dbReference>
<dbReference type="InterPro" id="IPR018275">
    <property type="entry name" value="Ribosomal_bS18_CS"/>
</dbReference>
<dbReference type="InterPro" id="IPR036870">
    <property type="entry name" value="Ribosomal_bS18_sf"/>
</dbReference>
<dbReference type="NCBIfam" id="TIGR00165">
    <property type="entry name" value="S18"/>
    <property type="match status" value="1"/>
</dbReference>
<dbReference type="PANTHER" id="PTHR13479">
    <property type="entry name" value="30S RIBOSOMAL PROTEIN S18"/>
    <property type="match status" value="1"/>
</dbReference>
<dbReference type="PANTHER" id="PTHR13479:SF40">
    <property type="entry name" value="SMALL RIBOSOMAL SUBUNIT PROTEIN BS18M"/>
    <property type="match status" value="1"/>
</dbReference>
<dbReference type="Pfam" id="PF01084">
    <property type="entry name" value="Ribosomal_S18"/>
    <property type="match status" value="1"/>
</dbReference>
<dbReference type="PRINTS" id="PR00974">
    <property type="entry name" value="RIBOSOMALS18"/>
</dbReference>
<dbReference type="SUPFAM" id="SSF46911">
    <property type="entry name" value="Ribosomal protein S18"/>
    <property type="match status" value="1"/>
</dbReference>
<dbReference type="PROSITE" id="PS00057">
    <property type="entry name" value="RIBOSOMAL_S18"/>
    <property type="match status" value="1"/>
</dbReference>
<name>RS18_LATSS</name>
<reference key="1">
    <citation type="journal article" date="2005" name="Nat. Biotechnol.">
        <title>The complete genome sequence of the meat-borne lactic acid bacterium Lactobacillus sakei 23K.</title>
        <authorList>
            <person name="Chaillou S."/>
            <person name="Champomier-Verges M.-C."/>
            <person name="Cornet M."/>
            <person name="Crutz-Le Coq A.-M."/>
            <person name="Dudez A.-M."/>
            <person name="Martin V."/>
            <person name="Beaufils S."/>
            <person name="Darbon-Rongere E."/>
            <person name="Bossy R."/>
            <person name="Loux V."/>
            <person name="Zagorec M."/>
        </authorList>
    </citation>
    <scope>NUCLEOTIDE SEQUENCE [LARGE SCALE GENOMIC DNA]</scope>
    <source>
        <strain>23K</strain>
    </source>
</reference>
<proteinExistence type="inferred from homology"/>
<sequence>MAQQRRGGNRRRRKVDFIAANHIEYIDYKDTDLLKRFISERGKILPRRVSGTSAKNQRRLTIAIKRARIMGLLPFVTED</sequence>
<protein>
    <recommendedName>
        <fullName evidence="1">Small ribosomal subunit protein bS18</fullName>
    </recommendedName>
    <alternativeName>
        <fullName evidence="2">30S ribosomal protein S18</fullName>
    </alternativeName>
</protein>
<keyword id="KW-1185">Reference proteome</keyword>
<keyword id="KW-0687">Ribonucleoprotein</keyword>
<keyword id="KW-0689">Ribosomal protein</keyword>
<keyword id="KW-0694">RNA-binding</keyword>
<keyword id="KW-0699">rRNA-binding</keyword>
<comment type="function">
    <text evidence="1">Binds as a heterodimer with protein bS6 to the central domain of the 16S rRNA, where it helps stabilize the platform of the 30S subunit.</text>
</comment>
<comment type="subunit">
    <text evidence="1">Part of the 30S ribosomal subunit. Forms a tight heterodimer with protein bS6.</text>
</comment>
<comment type="similarity">
    <text evidence="1">Belongs to the bacterial ribosomal protein bS18 family.</text>
</comment>
<accession>Q38ZR6</accession>
<feature type="chain" id="PRO_1000003522" description="Small ribosomal subunit protein bS18">
    <location>
        <begin position="1"/>
        <end position="79"/>
    </location>
</feature>